<organism>
    <name type="scientific">Schizosaccharomyces pombe (strain 972 / ATCC 24843)</name>
    <name type="common">Fission yeast</name>
    <dbReference type="NCBI Taxonomy" id="284812"/>
    <lineage>
        <taxon>Eukaryota</taxon>
        <taxon>Fungi</taxon>
        <taxon>Dikarya</taxon>
        <taxon>Ascomycota</taxon>
        <taxon>Taphrinomycotina</taxon>
        <taxon>Schizosaccharomycetes</taxon>
        <taxon>Schizosaccharomycetales</taxon>
        <taxon>Schizosaccharomycetaceae</taxon>
        <taxon>Schizosaccharomyces</taxon>
    </lineage>
</organism>
<feature type="chain" id="PRO_0000209357" description="V-type proton ATPase subunit C">
    <location>
        <begin position="1"/>
        <end position="394"/>
    </location>
</feature>
<feature type="modified residue" description="Phosphoserine" evidence="3">
    <location>
        <position position="17"/>
    </location>
</feature>
<protein>
    <recommendedName>
        <fullName>V-type proton ATPase subunit C</fullName>
        <shortName>V-ATPase subunit C</shortName>
    </recommendedName>
    <alternativeName>
        <fullName>Vacuolar proton pump subunit C</fullName>
    </alternativeName>
</protein>
<evidence type="ECO:0000250" key="1">
    <source>
        <dbReference type="UniProtKB" id="P31412"/>
    </source>
</evidence>
<evidence type="ECO:0000269" key="2">
    <source>
    </source>
</evidence>
<evidence type="ECO:0000269" key="3">
    <source>
    </source>
</evidence>
<evidence type="ECO:0000305" key="4"/>
<evidence type="ECO:0000312" key="5">
    <source>
        <dbReference type="PomBase" id="SPAPB2B4.05"/>
    </source>
</evidence>
<sequence>MSKSDFWILSVPSRGGSNADLCDDIERLLVSGSTSLISTVAPFDVPPFKVESLDVLISQSEQLTKQDAQCASAISKISDIIKNTVSSSSGDLKDYFMVQDKSPLEYVSSFAWNSSRFHMNKTISEISDRITSEIISFENDIRTRQTSFQQASSAFQNMQKKQSGNLSQKSLANIVHEEDVVHGSDYLTNVFIAVPLNLEKQFLNSYETLTDLVIPRSAKKLDQDSEFVLYTVVVFKKTADSFITKAREAKYTIREFTFEQGLRETEQSEFDDAAVKEKRMLSSLLRYASIAFSESFQGWIHLKCLCVYVESILRYGLPPDFSSVIFQPMAKSEVKIKNILLSKYAYLAQNPVGNNKVKNVDSSAGLDESMADLNLDEEYLPFVLFTVPSKVFNY</sequence>
<dbReference type="EMBL" id="CU329670">
    <property type="protein sequence ID" value="CAC21471.1"/>
    <property type="molecule type" value="Genomic_DNA"/>
</dbReference>
<dbReference type="RefSeq" id="NP_593891.1">
    <property type="nucleotide sequence ID" value="NM_001019321.2"/>
</dbReference>
<dbReference type="SMR" id="Q9HDW6"/>
<dbReference type="BioGRID" id="279889">
    <property type="interactions" value="1"/>
</dbReference>
<dbReference type="FunCoup" id="Q9HDW6">
    <property type="interactions" value="139"/>
</dbReference>
<dbReference type="STRING" id="284812.Q9HDW6"/>
<dbReference type="iPTMnet" id="Q9HDW6"/>
<dbReference type="PaxDb" id="4896-SPAPB2B4.05.1"/>
<dbReference type="EnsemblFungi" id="SPAPB2B4.05.1">
    <property type="protein sequence ID" value="SPAPB2B4.05.1:pep"/>
    <property type="gene ID" value="SPAPB2B4.05"/>
</dbReference>
<dbReference type="GeneID" id="2543469"/>
<dbReference type="KEGG" id="spo:2543469"/>
<dbReference type="PomBase" id="SPAPB2B4.05">
    <property type="gene designation" value="vma5"/>
</dbReference>
<dbReference type="VEuPathDB" id="FungiDB:SPAPB2B4.05"/>
<dbReference type="eggNOG" id="KOG2909">
    <property type="taxonomic scope" value="Eukaryota"/>
</dbReference>
<dbReference type="HOGENOM" id="CLU_017554_3_0_1"/>
<dbReference type="InParanoid" id="Q9HDW6"/>
<dbReference type="OMA" id="VMIWIHV"/>
<dbReference type="PhylomeDB" id="Q9HDW6"/>
<dbReference type="Reactome" id="R-SPO-1222556">
    <property type="pathway name" value="ROS and RNS production in phagocytes"/>
</dbReference>
<dbReference type="Reactome" id="R-SPO-77387">
    <property type="pathway name" value="Insulin receptor recycling"/>
</dbReference>
<dbReference type="Reactome" id="R-SPO-917977">
    <property type="pathway name" value="Transferrin endocytosis and recycling"/>
</dbReference>
<dbReference type="Reactome" id="R-SPO-9639288">
    <property type="pathway name" value="Amino acids regulate mTORC1"/>
</dbReference>
<dbReference type="PRO" id="PR:Q9HDW6"/>
<dbReference type="Proteomes" id="UP000002485">
    <property type="component" value="Chromosome I"/>
</dbReference>
<dbReference type="GO" id="GO:0005829">
    <property type="term" value="C:cytosol"/>
    <property type="evidence" value="ECO:0007005"/>
    <property type="project" value="PomBase"/>
</dbReference>
<dbReference type="GO" id="GO:0000221">
    <property type="term" value="C:vacuolar proton-transporting V-type ATPase, V1 domain"/>
    <property type="evidence" value="ECO:0000318"/>
    <property type="project" value="GO_Central"/>
</dbReference>
<dbReference type="GO" id="GO:0016887">
    <property type="term" value="F:ATP hydrolysis activity"/>
    <property type="evidence" value="ECO:0000305"/>
    <property type="project" value="PomBase"/>
</dbReference>
<dbReference type="GO" id="GO:0046961">
    <property type="term" value="F:proton-transporting ATPase activity, rotational mechanism"/>
    <property type="evidence" value="ECO:0000318"/>
    <property type="project" value="GO_Central"/>
</dbReference>
<dbReference type="GO" id="GO:0007035">
    <property type="term" value="P:vacuolar acidification"/>
    <property type="evidence" value="ECO:0000266"/>
    <property type="project" value="PomBase"/>
</dbReference>
<dbReference type="CDD" id="cd14785">
    <property type="entry name" value="V-ATPase_C"/>
    <property type="match status" value="1"/>
</dbReference>
<dbReference type="FunFam" id="3.30.70.100:FF:000002">
    <property type="entry name" value="V-type proton ATPase subunit C"/>
    <property type="match status" value="1"/>
</dbReference>
<dbReference type="Gene3D" id="3.30.70.100">
    <property type="match status" value="1"/>
</dbReference>
<dbReference type="Gene3D" id="1.20.1460.10">
    <property type="entry name" value="subunit c (vma5p) of the yeast v-atpase, domain 2"/>
    <property type="match status" value="1"/>
</dbReference>
<dbReference type="Gene3D" id="3.30.70.1180">
    <property type="entry name" value="Vacuolar atp synthase subunit c, domain 1"/>
    <property type="match status" value="1"/>
</dbReference>
<dbReference type="InterPro" id="IPR004907">
    <property type="entry name" value="ATPase_V1-cplx_csu"/>
</dbReference>
<dbReference type="InterPro" id="IPR036132">
    <property type="entry name" value="Vac_ATP_synth_c_sf"/>
</dbReference>
<dbReference type="PANTHER" id="PTHR10137">
    <property type="entry name" value="V-TYPE PROTON ATPASE SUBUNIT C"/>
    <property type="match status" value="1"/>
</dbReference>
<dbReference type="PANTHER" id="PTHR10137:SF0">
    <property type="entry name" value="V-TYPE PROTON ATPASE SUBUNIT C"/>
    <property type="match status" value="1"/>
</dbReference>
<dbReference type="Pfam" id="PF03223">
    <property type="entry name" value="V-ATPase_C"/>
    <property type="match status" value="1"/>
</dbReference>
<dbReference type="SUPFAM" id="SSF118203">
    <property type="entry name" value="Vacuolar ATP synthase subunit C"/>
    <property type="match status" value="1"/>
</dbReference>
<keyword id="KW-0963">Cytoplasm</keyword>
<keyword id="KW-0375">Hydrogen ion transport</keyword>
<keyword id="KW-0406">Ion transport</keyword>
<keyword id="KW-0472">Membrane</keyword>
<keyword id="KW-0597">Phosphoprotein</keyword>
<keyword id="KW-1185">Reference proteome</keyword>
<keyword id="KW-0813">Transport</keyword>
<keyword id="KW-0926">Vacuole</keyword>
<reference key="1">
    <citation type="journal article" date="2002" name="Nature">
        <title>The genome sequence of Schizosaccharomyces pombe.</title>
        <authorList>
            <person name="Wood V."/>
            <person name="Gwilliam R."/>
            <person name="Rajandream M.A."/>
            <person name="Lyne M.H."/>
            <person name="Lyne R."/>
            <person name="Stewart A."/>
            <person name="Sgouros J.G."/>
            <person name="Peat N."/>
            <person name="Hayles J."/>
            <person name="Baker S.G."/>
            <person name="Basham D."/>
            <person name="Bowman S."/>
            <person name="Brooks K."/>
            <person name="Brown D."/>
            <person name="Brown S."/>
            <person name="Chillingworth T."/>
            <person name="Churcher C.M."/>
            <person name="Collins M."/>
            <person name="Connor R."/>
            <person name="Cronin A."/>
            <person name="Davis P."/>
            <person name="Feltwell T."/>
            <person name="Fraser A."/>
            <person name="Gentles S."/>
            <person name="Goble A."/>
            <person name="Hamlin N."/>
            <person name="Harris D.E."/>
            <person name="Hidalgo J."/>
            <person name="Hodgson G."/>
            <person name="Holroyd S."/>
            <person name="Hornsby T."/>
            <person name="Howarth S."/>
            <person name="Huckle E.J."/>
            <person name="Hunt S."/>
            <person name="Jagels K."/>
            <person name="James K.D."/>
            <person name="Jones L."/>
            <person name="Jones M."/>
            <person name="Leather S."/>
            <person name="McDonald S."/>
            <person name="McLean J."/>
            <person name="Mooney P."/>
            <person name="Moule S."/>
            <person name="Mungall K.L."/>
            <person name="Murphy L.D."/>
            <person name="Niblett D."/>
            <person name="Odell C."/>
            <person name="Oliver K."/>
            <person name="O'Neil S."/>
            <person name="Pearson D."/>
            <person name="Quail M.A."/>
            <person name="Rabbinowitsch E."/>
            <person name="Rutherford K.M."/>
            <person name="Rutter S."/>
            <person name="Saunders D."/>
            <person name="Seeger K."/>
            <person name="Sharp S."/>
            <person name="Skelton J."/>
            <person name="Simmonds M.N."/>
            <person name="Squares R."/>
            <person name="Squares S."/>
            <person name="Stevens K."/>
            <person name="Taylor K."/>
            <person name="Taylor R.G."/>
            <person name="Tivey A."/>
            <person name="Walsh S.V."/>
            <person name="Warren T."/>
            <person name="Whitehead S."/>
            <person name="Woodward J.R."/>
            <person name="Volckaert G."/>
            <person name="Aert R."/>
            <person name="Robben J."/>
            <person name="Grymonprez B."/>
            <person name="Weltjens I."/>
            <person name="Vanstreels E."/>
            <person name="Rieger M."/>
            <person name="Schaefer M."/>
            <person name="Mueller-Auer S."/>
            <person name="Gabel C."/>
            <person name="Fuchs M."/>
            <person name="Duesterhoeft A."/>
            <person name="Fritzc C."/>
            <person name="Holzer E."/>
            <person name="Moestl D."/>
            <person name="Hilbert H."/>
            <person name="Borzym K."/>
            <person name="Langer I."/>
            <person name="Beck A."/>
            <person name="Lehrach H."/>
            <person name="Reinhardt R."/>
            <person name="Pohl T.M."/>
            <person name="Eger P."/>
            <person name="Zimmermann W."/>
            <person name="Wedler H."/>
            <person name="Wambutt R."/>
            <person name="Purnelle B."/>
            <person name="Goffeau A."/>
            <person name="Cadieu E."/>
            <person name="Dreano S."/>
            <person name="Gloux S."/>
            <person name="Lelaure V."/>
            <person name="Mottier S."/>
            <person name="Galibert F."/>
            <person name="Aves S.J."/>
            <person name="Xiang Z."/>
            <person name="Hunt C."/>
            <person name="Moore K."/>
            <person name="Hurst S.M."/>
            <person name="Lucas M."/>
            <person name="Rochet M."/>
            <person name="Gaillardin C."/>
            <person name="Tallada V.A."/>
            <person name="Garzon A."/>
            <person name="Thode G."/>
            <person name="Daga R.R."/>
            <person name="Cruzado L."/>
            <person name="Jimenez J."/>
            <person name="Sanchez M."/>
            <person name="del Rey F."/>
            <person name="Benito J."/>
            <person name="Dominguez A."/>
            <person name="Revuelta J.L."/>
            <person name="Moreno S."/>
            <person name="Armstrong J."/>
            <person name="Forsburg S.L."/>
            <person name="Cerutti L."/>
            <person name="Lowe T."/>
            <person name="McCombie W.R."/>
            <person name="Paulsen I."/>
            <person name="Potashkin J."/>
            <person name="Shpakovski G.V."/>
            <person name="Ussery D."/>
            <person name="Barrell B.G."/>
            <person name="Nurse P."/>
        </authorList>
    </citation>
    <scope>NUCLEOTIDE SEQUENCE [LARGE SCALE GENOMIC DNA]</scope>
    <source>
        <strain>972 / ATCC 24843</strain>
    </source>
</reference>
<reference key="2">
    <citation type="journal article" date="2006" name="Nat. Biotechnol.">
        <title>ORFeome cloning and global analysis of protein localization in the fission yeast Schizosaccharomyces pombe.</title>
        <authorList>
            <person name="Matsuyama A."/>
            <person name="Arai R."/>
            <person name="Yashiroda Y."/>
            <person name="Shirai A."/>
            <person name="Kamata A."/>
            <person name="Sekido S."/>
            <person name="Kobayashi Y."/>
            <person name="Hashimoto A."/>
            <person name="Hamamoto M."/>
            <person name="Hiraoka Y."/>
            <person name="Horinouchi S."/>
            <person name="Yoshida M."/>
        </authorList>
    </citation>
    <scope>SUBCELLULAR LOCATION [LARGE SCALE ANALYSIS]</scope>
</reference>
<reference key="3">
    <citation type="journal article" date="2008" name="J. Proteome Res.">
        <title>Phosphoproteome analysis of fission yeast.</title>
        <authorList>
            <person name="Wilson-Grady J.T."/>
            <person name="Villen J."/>
            <person name="Gygi S.P."/>
        </authorList>
    </citation>
    <scope>PHOSPHORYLATION [LARGE SCALE ANALYSIS] AT SER-17</scope>
    <scope>IDENTIFICATION BY MASS SPECTROMETRY</scope>
</reference>
<accession>Q9HDW6</accession>
<comment type="function">
    <text evidence="1">Subunit of the V1 complex of vacuolar(H+)-ATPase (V-ATPase), a multisubunit enzyme composed of a peripheral complex (V1) that hydrolyzes ATP and a membrane integral complex (V0) that translocates protons (By similarity). V-ATPase is responsible for acidifying and maintaining the pH of intracellular compartments (By similarity). Subunit C is necessary for the assembly of the catalytic sector of the enzyme and is likely to have a specific function in its catalytic activity (By similarity). Reversibly leaves the enzyme after glucose depletion, causing the catalytic subcomplex V1 to detach from the V0 section (By similarity).</text>
</comment>
<comment type="subunit">
    <text evidence="1">V-ATPase is a heteromultimeric enzyme composed of a peripheral catalytic V1 complex (components A to H) attached to an integral membrane V0 proton pore complex (components: a, c, c', c'', d, e, f and VOA1).</text>
</comment>
<comment type="subcellular location">
    <subcellularLocation>
        <location evidence="2">Cytoplasm</location>
    </subcellularLocation>
    <subcellularLocation>
        <location evidence="1">Vacuole membrane</location>
        <topology evidence="1">Peripheral membrane protein</topology>
        <orientation evidence="4">Cytoplasmic side</orientation>
    </subcellularLocation>
</comment>
<comment type="similarity">
    <text evidence="4">Belongs to the V-ATPase C subunit family.</text>
</comment>
<proteinExistence type="evidence at protein level"/>
<name>VATC_SCHPO</name>
<gene>
    <name evidence="5" type="primary">vma5</name>
    <name evidence="5" type="ORF">SPAPB2B4.05</name>
</gene>